<name>NU3C_RANMC</name>
<comment type="function">
    <text evidence="1">NDH shuttles electrons from NAD(P)H:plastoquinone, via FMN and iron-sulfur (Fe-S) centers, to quinones in the photosynthetic chain and possibly in a chloroplast respiratory chain. The immediate electron acceptor for the enzyme in this species is believed to be plastoquinone. Couples the redox reaction to proton translocation, and thus conserves the redox energy in a proton gradient.</text>
</comment>
<comment type="catalytic activity">
    <reaction evidence="1">
        <text>a plastoquinone + NADH + (n+1) H(+)(in) = a plastoquinol + NAD(+) + n H(+)(out)</text>
        <dbReference type="Rhea" id="RHEA:42608"/>
        <dbReference type="Rhea" id="RHEA-COMP:9561"/>
        <dbReference type="Rhea" id="RHEA-COMP:9562"/>
        <dbReference type="ChEBI" id="CHEBI:15378"/>
        <dbReference type="ChEBI" id="CHEBI:17757"/>
        <dbReference type="ChEBI" id="CHEBI:57540"/>
        <dbReference type="ChEBI" id="CHEBI:57945"/>
        <dbReference type="ChEBI" id="CHEBI:62192"/>
    </reaction>
</comment>
<comment type="catalytic activity">
    <reaction evidence="1">
        <text>a plastoquinone + NADPH + (n+1) H(+)(in) = a plastoquinol + NADP(+) + n H(+)(out)</text>
        <dbReference type="Rhea" id="RHEA:42612"/>
        <dbReference type="Rhea" id="RHEA-COMP:9561"/>
        <dbReference type="Rhea" id="RHEA-COMP:9562"/>
        <dbReference type="ChEBI" id="CHEBI:15378"/>
        <dbReference type="ChEBI" id="CHEBI:17757"/>
        <dbReference type="ChEBI" id="CHEBI:57783"/>
        <dbReference type="ChEBI" id="CHEBI:58349"/>
        <dbReference type="ChEBI" id="CHEBI:62192"/>
    </reaction>
</comment>
<comment type="subunit">
    <text evidence="1">NDH is composed of at least 16 different subunits, 5 of which are encoded in the nucleus.</text>
</comment>
<comment type="subcellular location">
    <subcellularLocation>
        <location evidence="1">Plastid</location>
        <location evidence="1">Chloroplast thylakoid membrane</location>
        <topology evidence="1">Multi-pass membrane protein</topology>
    </subcellularLocation>
</comment>
<comment type="similarity">
    <text evidence="1">Belongs to the complex I subunit 3 family.</text>
</comment>
<sequence>MFLLHEYDIFWAFLIISSVIPILAFLISGVLAPINEGPEKLSSYESGIEPMGDAWLQFRIRYYMFALVFVVFDVETVFLYPWAMSFDVLGVSVFVEALIFVLILIVGLVYAWRKGALEWS</sequence>
<feature type="chain" id="PRO_0000362871" description="NAD(P)H-quinone oxidoreductase subunit 3, chloroplastic">
    <location>
        <begin position="1"/>
        <end position="120"/>
    </location>
</feature>
<feature type="transmembrane region" description="Helical" evidence="1">
    <location>
        <begin position="9"/>
        <end position="29"/>
    </location>
</feature>
<feature type="transmembrane region" description="Helical" evidence="1">
    <location>
        <begin position="64"/>
        <end position="84"/>
    </location>
</feature>
<feature type="transmembrane region" description="Helical" evidence="1">
    <location>
        <begin position="88"/>
        <end position="108"/>
    </location>
</feature>
<gene>
    <name evidence="1" type="primary">ndhC</name>
</gene>
<proteinExistence type="inferred from homology"/>
<evidence type="ECO:0000255" key="1">
    <source>
        <dbReference type="HAMAP-Rule" id="MF_01394"/>
    </source>
</evidence>
<reference key="1">
    <citation type="journal article" date="2007" name="BMC Genomics">
        <title>Comparative chloroplast genomics: analyses including new sequences from the angiosperms Nuphar advena and Ranunculus macranthus.</title>
        <authorList>
            <person name="Raubeson L.A."/>
            <person name="Peery R."/>
            <person name="Chumley T.W."/>
            <person name="Dziubek C."/>
            <person name="Fourcade H.M."/>
            <person name="Boore J.L."/>
            <person name="Jansen R.K."/>
        </authorList>
    </citation>
    <scope>NUCLEOTIDE SEQUENCE [LARGE SCALE GENOMIC DNA]</scope>
</reference>
<keyword id="KW-0150">Chloroplast</keyword>
<keyword id="KW-0472">Membrane</keyword>
<keyword id="KW-0520">NAD</keyword>
<keyword id="KW-0521">NADP</keyword>
<keyword id="KW-0934">Plastid</keyword>
<keyword id="KW-0618">Plastoquinone</keyword>
<keyword id="KW-0874">Quinone</keyword>
<keyword id="KW-0793">Thylakoid</keyword>
<keyword id="KW-1278">Translocase</keyword>
<keyword id="KW-0812">Transmembrane</keyword>
<keyword id="KW-1133">Transmembrane helix</keyword>
<keyword id="KW-0813">Transport</keyword>
<dbReference type="EC" id="7.1.1.-" evidence="1"/>
<dbReference type="EMBL" id="DQ359689">
    <property type="protein sequence ID" value="ABC70761.1"/>
    <property type="molecule type" value="Genomic_DNA"/>
</dbReference>
<dbReference type="RefSeq" id="YP_001004191.1">
    <property type="nucleotide sequence ID" value="NC_008796.1"/>
</dbReference>
<dbReference type="SMR" id="A1XGP3"/>
<dbReference type="GeneID" id="4712160"/>
<dbReference type="GO" id="GO:0009535">
    <property type="term" value="C:chloroplast thylakoid membrane"/>
    <property type="evidence" value="ECO:0007669"/>
    <property type="project" value="UniProtKB-SubCell"/>
</dbReference>
<dbReference type="GO" id="GO:0030964">
    <property type="term" value="C:NADH dehydrogenase complex"/>
    <property type="evidence" value="ECO:0007669"/>
    <property type="project" value="TreeGrafter"/>
</dbReference>
<dbReference type="GO" id="GO:0008137">
    <property type="term" value="F:NADH dehydrogenase (ubiquinone) activity"/>
    <property type="evidence" value="ECO:0007669"/>
    <property type="project" value="InterPro"/>
</dbReference>
<dbReference type="GO" id="GO:0048038">
    <property type="term" value="F:quinone binding"/>
    <property type="evidence" value="ECO:0007669"/>
    <property type="project" value="UniProtKB-KW"/>
</dbReference>
<dbReference type="GO" id="GO:0019684">
    <property type="term" value="P:photosynthesis, light reaction"/>
    <property type="evidence" value="ECO:0007669"/>
    <property type="project" value="UniProtKB-UniRule"/>
</dbReference>
<dbReference type="FunFam" id="1.20.58.1610:FF:000001">
    <property type="entry name" value="NAD(P)H-quinone oxidoreductase subunit 3, chloroplastic"/>
    <property type="match status" value="1"/>
</dbReference>
<dbReference type="Gene3D" id="1.20.58.1610">
    <property type="entry name" value="NADH:ubiquinone/plastoquinone oxidoreductase, chain 3"/>
    <property type="match status" value="1"/>
</dbReference>
<dbReference type="HAMAP" id="MF_01394">
    <property type="entry name" value="NDH1_NuoA"/>
    <property type="match status" value="1"/>
</dbReference>
<dbReference type="InterPro" id="IPR023043">
    <property type="entry name" value="NAD(P)H_OxRDtase_bac/plastid"/>
</dbReference>
<dbReference type="InterPro" id="IPR000440">
    <property type="entry name" value="NADH_UbQ/plastoQ_OxRdtase_su3"/>
</dbReference>
<dbReference type="InterPro" id="IPR038430">
    <property type="entry name" value="NDAH_ubi_oxred_su3_sf"/>
</dbReference>
<dbReference type="PANTHER" id="PTHR11058">
    <property type="entry name" value="NADH-UBIQUINONE OXIDOREDUCTASE CHAIN 3"/>
    <property type="match status" value="1"/>
</dbReference>
<dbReference type="PANTHER" id="PTHR11058:SF9">
    <property type="entry name" value="NADH-UBIQUINONE OXIDOREDUCTASE CHAIN 3"/>
    <property type="match status" value="1"/>
</dbReference>
<dbReference type="Pfam" id="PF00507">
    <property type="entry name" value="Oxidored_q4"/>
    <property type="match status" value="1"/>
</dbReference>
<accession>A1XGP3</accession>
<organism>
    <name type="scientific">Ranunculus macranthus</name>
    <name type="common">Large buttercup</name>
    <dbReference type="NCBI Taxonomy" id="334596"/>
    <lineage>
        <taxon>Eukaryota</taxon>
        <taxon>Viridiplantae</taxon>
        <taxon>Streptophyta</taxon>
        <taxon>Embryophyta</taxon>
        <taxon>Tracheophyta</taxon>
        <taxon>Spermatophyta</taxon>
        <taxon>Magnoliopsida</taxon>
        <taxon>Ranunculales</taxon>
        <taxon>Ranunculaceae</taxon>
        <taxon>Ranunculoideae</taxon>
        <taxon>Ranunculeae</taxon>
        <taxon>Ranunculus</taxon>
    </lineage>
</organism>
<geneLocation type="chloroplast"/>
<protein>
    <recommendedName>
        <fullName evidence="1">NAD(P)H-quinone oxidoreductase subunit 3, chloroplastic</fullName>
        <ecNumber evidence="1">7.1.1.-</ecNumber>
    </recommendedName>
    <alternativeName>
        <fullName evidence="1">NAD(P)H dehydrogenase subunit 3</fullName>
    </alternativeName>
    <alternativeName>
        <fullName evidence="1">NADH-plastoquinone oxidoreductase subunit 3</fullName>
    </alternativeName>
</protein>